<accession>P0DUT8</accession>
<organism>
    <name type="scientific">Metarhizium anisopliae</name>
    <name type="common">Entomophthora anisopliae</name>
    <dbReference type="NCBI Taxonomy" id="5530"/>
    <lineage>
        <taxon>Eukaryota</taxon>
        <taxon>Fungi</taxon>
        <taxon>Dikarya</taxon>
        <taxon>Ascomycota</taxon>
        <taxon>Pezizomycotina</taxon>
        <taxon>Sordariomycetes</taxon>
        <taxon>Hypocreomycetidae</taxon>
        <taxon>Hypocreales</taxon>
        <taxon>Clavicipitaceae</taxon>
        <taxon>Metarhizium</taxon>
    </lineage>
</organism>
<keyword id="KW-0325">Glycoprotein</keyword>
<keyword id="KW-0472">Membrane</keyword>
<keyword id="KW-0812">Transmembrane</keyword>
<keyword id="KW-1133">Transmembrane helix</keyword>
<protein>
    <recommendedName>
        <fullName evidence="5">Polyenoic acids biosynthesis gene cluster protein Ba17b</fullName>
    </recommendedName>
    <alternativeName>
        <fullName evidence="6">PKS17 biosynthesis gene cluster protein Ba17b</fullName>
    </alternativeName>
</protein>
<evidence type="ECO:0000255" key="1"/>
<evidence type="ECO:0000255" key="2">
    <source>
        <dbReference type="PROSITE-ProRule" id="PRU00498"/>
    </source>
</evidence>
<evidence type="ECO:0000269" key="3">
    <source>
    </source>
</evidence>
<evidence type="ECO:0000269" key="4">
    <source>
    </source>
</evidence>
<evidence type="ECO:0000303" key="5">
    <source>
    </source>
</evidence>
<evidence type="ECO:0000303" key="6">
    <source>
    </source>
</evidence>
<evidence type="ECO:0000305" key="7"/>
<feature type="chain" id="PRO_0000453548" description="Polyenoic acids biosynthesis gene cluster protein Ba17b">
    <location>
        <begin position="1"/>
        <end position="367"/>
    </location>
</feature>
<feature type="transmembrane region" description="Helical" evidence="1">
    <location>
        <begin position="16"/>
        <end position="36"/>
    </location>
</feature>
<feature type="transmembrane region" description="Helical" evidence="1">
    <location>
        <begin position="50"/>
        <end position="70"/>
    </location>
</feature>
<feature type="transmembrane region" description="Helical" evidence="1">
    <location>
        <begin position="90"/>
        <end position="110"/>
    </location>
</feature>
<feature type="transmembrane region" description="Helical" evidence="1">
    <location>
        <begin position="137"/>
        <end position="157"/>
    </location>
</feature>
<feature type="transmembrane region" description="Helical" evidence="1">
    <location>
        <begin position="183"/>
        <end position="203"/>
    </location>
</feature>
<feature type="transmembrane region" description="Helical" evidence="1">
    <location>
        <begin position="211"/>
        <end position="231"/>
    </location>
</feature>
<feature type="transmembrane region" description="Helical" evidence="1">
    <location>
        <begin position="259"/>
        <end position="279"/>
    </location>
</feature>
<feature type="glycosylation site" description="N-linked (GlcNAc...) asparagine" evidence="2">
    <location>
        <position position="133"/>
    </location>
</feature>
<feature type="glycosylation site" description="N-linked (GlcNAc...) asparagine" evidence="2">
    <location>
        <position position="245"/>
    </location>
</feature>
<reference key="1">
    <citation type="journal article" date="2014" name="BMC Genomics">
        <title>Comparative genome analysis of entomopathogenic fungi reveals a complex set of secreted proteins.</title>
        <authorList>
            <person name="Staats C.C."/>
            <person name="Junges A."/>
            <person name="Guedes R.L."/>
            <person name="Thompson C.E."/>
            <person name="de Morais G.L."/>
            <person name="Boldo J.T."/>
            <person name="de Almeida L.G."/>
            <person name="Andreis F.C."/>
            <person name="Gerber A.L."/>
            <person name="Sbaraini N."/>
            <person name="da Paixao R.L."/>
            <person name="Broetto L."/>
            <person name="Landell M."/>
            <person name="Santi L."/>
            <person name="Beys-da-Silva W.O."/>
            <person name="Silveira C.P."/>
            <person name="Serrano T.R."/>
            <person name="de Oliveira E.S."/>
            <person name="Kmetzsch L."/>
            <person name="Vainstein M.H."/>
            <person name="de Vasconcelos A.T."/>
            <person name="Schrank A."/>
        </authorList>
    </citation>
    <scope>NUCLEOTIDE SEQUENCE [LARGE SCALE GENOMIC DNA]</scope>
</reference>
<reference key="2">
    <citation type="journal article" date="2016" name="BMC Genomics">
        <title>Secondary metabolite gene clusters in the entomopathogen fungus Metarhizium anisopliae: genome identification and patterns of expression in a cuticle infection model.</title>
        <authorList>
            <person name="Sbaraini N."/>
            <person name="Guedes R.L."/>
            <person name="Andreis F.C."/>
            <person name="Junges A."/>
            <person name="de Morais G.L."/>
            <person name="Vainstein M.H."/>
            <person name="de Vasconcelos A.T."/>
            <person name="Schrank A."/>
        </authorList>
    </citation>
    <scope>IDENTIFICATION</scope>
    <scope>INDUCTION</scope>
</reference>
<reference key="3">
    <citation type="journal article" date="2021" name="Fungal Genet. Biol.">
        <title>Polyketides produced by the entomopathogenic fungus Metarhizium anisopliae induce Candida albicans growth.</title>
        <authorList>
            <person name="Sbaraini N."/>
            <person name="Hu J."/>
            <person name="Roux I."/>
            <person name="Phan C.S."/>
            <person name="Motta H."/>
            <person name="Rezaee H."/>
            <person name="Schrank A."/>
            <person name="Chooi Y.H."/>
            <person name="Christian Staats C."/>
        </authorList>
    </citation>
    <scope>FUNCTION</scope>
</reference>
<comment type="function">
    <text evidence="4">Part of the gene cluster that mediates the biosynthesis of (2Z,4E,6E,10E)-9-hydroxydodeca-2,4,6,10-tetraenoic acid (BAA), (2E,4E,6E,10E)-9-hydroxydodeca-2,4,6,10-tetraenoic acid (BAB), and (2Z,4E,6E)-octa-2,4,6-trienedioic acid (PBA) (PubMed:33991663). The highly reducing polyketide synthase Ba17a is sufficent to produce PBA and BAA (PubMed:33991663). The still to be characterized protein Ba17b leads to an increased production of BAA as well as to the production of the new compound BAB (PubMed:33991663). BAA does not possess insecticidal activity against G.mellonella larvae, however, both BAA and BAB increase the growth of Candida albicans and BAA can mitigate the fungicidal effects of fluconazole over C.albicans, suggesting that generalist pathogens such as M.anisopliae, can potentially manipulate the yeast microbiota found in arthropods (and anywhere else) by the activity of compounds as BAA and BAB (PubMed:33991663).</text>
</comment>
<comment type="pathway">
    <text evidence="4">Secondary metabolite biosynthesis.</text>
</comment>
<comment type="subcellular location">
    <subcellularLocation>
        <location evidence="1">Membrane</location>
        <topology evidence="1">Multi-pass membrane protein</topology>
    </subcellularLocation>
</comment>
<comment type="induction">
    <text evidence="3">Expression is induced under mimicked-infection conditions.</text>
</comment>
<comment type="similarity">
    <text evidence="7">Belongs to the SAT4 family.</text>
</comment>
<gene>
    <name evidence="6" type="primary">Ba17b</name>
    <name type="ORF">MANI_002819</name>
</gene>
<sequence length="367" mass="39430">MASEMNASPEYTGYRLEVFIAVFTPLTIIAVALRFYARSLTSKKIDSGDWLIIAALVGQIVAGGIAIGAVKQAGVGHHAAYLAETNPETLVAFFKYLVAMSTWYATTEGLAKLAVCILYKRLFPQRGIHMVINTTMLVLVGASVGGGLADLFGCTPFSAHWGTAEEQAAHCIDTEALFVWGSFPNIVTDVVLLVLPMPIVWGLHASVRLRLVLVLTFLFGSIFGELIGGDSGLITSVLRFIAFYNKSSFIDPTFHAVELIIWTVCEPGVYLIAACLLVYRPLLEKIGIPLVGGVSSRGGNRQEPTELAFQKPSRPRNGAVIKSIGSGSISESGFEYIGDDDQRPLRRQGGITATTNVEVTWAAGSAV</sequence>
<dbReference type="EMBL" id="JNNZ01000213">
    <property type="protein sequence ID" value="KFG78607.1"/>
    <property type="molecule type" value="Genomic_DNA"/>
</dbReference>
<dbReference type="GlyCosmos" id="P0DUT8">
    <property type="glycosylation" value="2 sites, No reported glycans"/>
</dbReference>
<dbReference type="VEuPathDB" id="FungiDB:MAN_00013"/>
<dbReference type="OrthoDB" id="8420at5529"/>
<dbReference type="GO" id="GO:0016020">
    <property type="term" value="C:membrane"/>
    <property type="evidence" value="ECO:0007669"/>
    <property type="project" value="UniProtKB-SubCell"/>
</dbReference>
<dbReference type="InterPro" id="IPR049326">
    <property type="entry name" value="Rhodopsin_dom_fungi"/>
</dbReference>
<dbReference type="InterPro" id="IPR052337">
    <property type="entry name" value="SAT4-like"/>
</dbReference>
<dbReference type="PANTHER" id="PTHR33048:SF47">
    <property type="entry name" value="INTEGRAL MEMBRANE PROTEIN-RELATED"/>
    <property type="match status" value="1"/>
</dbReference>
<dbReference type="PANTHER" id="PTHR33048">
    <property type="entry name" value="PTH11-LIKE INTEGRAL MEMBRANE PROTEIN (AFU_ORTHOLOGUE AFUA_5G11245)"/>
    <property type="match status" value="1"/>
</dbReference>
<dbReference type="Pfam" id="PF20684">
    <property type="entry name" value="Fung_rhodopsin"/>
    <property type="match status" value="1"/>
</dbReference>
<proteinExistence type="evidence at transcript level"/>
<name>BA17B_METAN</name>